<proteinExistence type="inferred from homology"/>
<organism>
    <name type="scientific">Eremothecium gossypii (strain ATCC 10895 / CBS 109.51 / FGSC 9923 / NRRL Y-1056)</name>
    <name type="common">Yeast</name>
    <name type="synonym">Ashbya gossypii</name>
    <dbReference type="NCBI Taxonomy" id="284811"/>
    <lineage>
        <taxon>Eukaryota</taxon>
        <taxon>Fungi</taxon>
        <taxon>Dikarya</taxon>
        <taxon>Ascomycota</taxon>
        <taxon>Saccharomycotina</taxon>
        <taxon>Saccharomycetes</taxon>
        <taxon>Saccharomycetales</taxon>
        <taxon>Saccharomycetaceae</taxon>
        <taxon>Eremothecium</taxon>
    </lineage>
</organism>
<reference key="1">
    <citation type="journal article" date="2004" name="Science">
        <title>The Ashbya gossypii genome as a tool for mapping the ancient Saccharomyces cerevisiae genome.</title>
        <authorList>
            <person name="Dietrich F.S."/>
            <person name="Voegeli S."/>
            <person name="Brachat S."/>
            <person name="Lerch A."/>
            <person name="Gates K."/>
            <person name="Steiner S."/>
            <person name="Mohr C."/>
            <person name="Poehlmann R."/>
            <person name="Luedi P."/>
            <person name="Choi S."/>
            <person name="Wing R.A."/>
            <person name="Flavier A."/>
            <person name="Gaffney T.D."/>
            <person name="Philippsen P."/>
        </authorList>
    </citation>
    <scope>NUCLEOTIDE SEQUENCE [LARGE SCALE GENOMIC DNA]</scope>
    <source>
        <strain>ATCC 10895 / CBS 109.51 / FGSC 9923 / NRRL Y-1056</strain>
    </source>
</reference>
<reference key="2">
    <citation type="journal article" date="2013" name="G3 (Bethesda)">
        <title>Genomes of Ashbya fungi isolated from insects reveal four mating-type loci, numerous translocations, lack of transposons, and distinct gene duplications.</title>
        <authorList>
            <person name="Dietrich F.S."/>
            <person name="Voegeli S."/>
            <person name="Kuo S."/>
            <person name="Philippsen P."/>
        </authorList>
    </citation>
    <scope>GENOME REANNOTATION</scope>
    <source>
        <strain>ATCC 10895 / CBS 109.51 / FGSC 9923 / NRRL Y-1056</strain>
    </source>
</reference>
<dbReference type="EMBL" id="AE016819">
    <property type="protein sequence ID" value="AAS53288.2"/>
    <property type="molecule type" value="Genomic_DNA"/>
</dbReference>
<dbReference type="RefSeq" id="NP_985464.2">
    <property type="nucleotide sequence ID" value="NM_210818.2"/>
</dbReference>
<dbReference type="SMR" id="Q755A9"/>
<dbReference type="FunCoup" id="Q755A9">
    <property type="interactions" value="160"/>
</dbReference>
<dbReference type="STRING" id="284811.Q755A9"/>
<dbReference type="EnsemblFungi" id="AAS53288">
    <property type="protein sequence ID" value="AAS53288"/>
    <property type="gene ID" value="AGOS_AFL084W"/>
</dbReference>
<dbReference type="GeneID" id="4621691"/>
<dbReference type="KEGG" id="ago:AGOS_AFL084W"/>
<dbReference type="eggNOG" id="ENOG502RYE7">
    <property type="taxonomic scope" value="Eukaryota"/>
</dbReference>
<dbReference type="HOGENOM" id="CLU_069890_0_0_1"/>
<dbReference type="InParanoid" id="Q755A9"/>
<dbReference type="OMA" id="FIYAKDF"/>
<dbReference type="OrthoDB" id="4035046at2759"/>
<dbReference type="Proteomes" id="UP000000591">
    <property type="component" value="Chromosome VI"/>
</dbReference>
<dbReference type="GO" id="GO:0005737">
    <property type="term" value="C:cytoplasm"/>
    <property type="evidence" value="ECO:0007669"/>
    <property type="project" value="UniProtKB-KW"/>
</dbReference>
<dbReference type="GO" id="GO:0031965">
    <property type="term" value="C:nuclear membrane"/>
    <property type="evidence" value="ECO:0007669"/>
    <property type="project" value="UniProtKB-SubCell"/>
</dbReference>
<dbReference type="GO" id="GO:0005816">
    <property type="term" value="C:spindle pole body"/>
    <property type="evidence" value="ECO:0007669"/>
    <property type="project" value="UniProtKB-SubCell"/>
</dbReference>
<dbReference type="GO" id="GO:0071988">
    <property type="term" value="P:protein localization to spindle pole body"/>
    <property type="evidence" value="ECO:0007669"/>
    <property type="project" value="InterPro"/>
</dbReference>
<dbReference type="GO" id="GO:0030474">
    <property type="term" value="P:spindle pole body duplication"/>
    <property type="evidence" value="ECO:0007669"/>
    <property type="project" value="InterPro"/>
</dbReference>
<dbReference type="InterPro" id="IPR031433">
    <property type="entry name" value="Mps2"/>
</dbReference>
<dbReference type="Pfam" id="PF17060">
    <property type="entry name" value="MPS2"/>
    <property type="match status" value="2"/>
</dbReference>
<gene>
    <name type="primary">MPS2</name>
    <name type="ordered locus">AFL084W</name>
</gene>
<name>MPS2_EREGS</name>
<sequence length="338" mass="38451">MWREEAREQLRRGRCCFAAASVVSTAKHNKSLGNCTHGSGVMTEAEGILNNVWDAVDSKQQGFIYAKDMPDLVGRFGQFLAQSLTSRANDEAIAAFASEKPFYKLDKEQFKSTFQTLVGTSLQTAVELAGHGEPRPRLFGAIRRASATGDEQAREELERKSAELSRVRDELDEWKSKYQFLEREFLFYQTHHENSVDSTQHEFIISEMKRTIEEQTRMIGQLRRQVQGGTQVLARAGKRASPVDVFMYVSRQGLLLLMRMPKAAFLLLLLGYFVWYTVMGGAVQGPDPSVALPEPPKQPWWEQNNIISALYWYLTDTFEPSQRINDTVNDNYNSLFGL</sequence>
<accession>Q755A9</accession>
<protein>
    <recommendedName>
        <fullName>Monopolar spindle protein 2</fullName>
    </recommendedName>
</protein>
<keyword id="KW-0175">Coiled coil</keyword>
<keyword id="KW-0963">Cytoplasm</keyword>
<keyword id="KW-0206">Cytoskeleton</keyword>
<keyword id="KW-0472">Membrane</keyword>
<keyword id="KW-0539">Nucleus</keyword>
<keyword id="KW-1185">Reference proteome</keyword>
<keyword id="KW-0812">Transmembrane</keyword>
<keyword id="KW-1133">Transmembrane helix</keyword>
<comment type="function">
    <text evidence="1">Component of the spindle pole body (SPB) required for insertion of the nascent SPB into the nuclear envelope and for the proper execution of spindle pole body (SPB) duplication.</text>
</comment>
<comment type="subcellular location">
    <subcellularLocation>
        <location evidence="1">Nucleus membrane</location>
        <topology evidence="1">Single-pass membrane protein</topology>
    </subcellularLocation>
    <subcellularLocation>
        <location evidence="1">Cytoplasm</location>
        <location evidence="1">Cytoskeleton</location>
        <location evidence="1">Microtubule organizing center</location>
        <location evidence="1">Spindle pole body</location>
    </subcellularLocation>
</comment>
<comment type="similarity">
    <text evidence="3">Belongs to the MPS2 family.</text>
</comment>
<feature type="chain" id="PRO_0000409155" description="Monopolar spindle protein 2">
    <location>
        <begin position="1"/>
        <end position="338"/>
    </location>
</feature>
<feature type="transmembrane region" description="Helical" evidence="2">
    <location>
        <begin position="263"/>
        <end position="283"/>
    </location>
</feature>
<feature type="coiled-coil region" evidence="2">
    <location>
        <begin position="149"/>
        <end position="228"/>
    </location>
</feature>
<evidence type="ECO:0000250" key="1"/>
<evidence type="ECO:0000255" key="2"/>
<evidence type="ECO:0000305" key="3"/>